<protein>
    <recommendedName>
        <fullName evidence="1">ATP synthase subunit beta, chloroplastic</fullName>
        <ecNumber evidence="1">7.1.2.2</ecNumber>
    </recommendedName>
    <alternativeName>
        <fullName evidence="1">ATP synthase F1 sector subunit beta</fullName>
    </alternativeName>
    <alternativeName>
        <fullName evidence="1">F-ATPase subunit beta</fullName>
    </alternativeName>
</protein>
<accession>P32978</accession>
<sequence length="481" mass="51644">MSVSTETKSSGRITQIIGPVLDVSFPAGKMPNIYNALTVGGKNEAGQEISVTCEVQQLLGDHCVRAVAMSATDGLMRGMEVLDSGKPLNVPVGAATLGRIFNVLGEPVDNLGPVNTKDQLPIHRSAPAFVDLDTKLSIFESGIKVVDLLAPYRRGGKIGLFGGAGVGKTVLIMELINNIAKAHGGVSVFGGVGERTREGNDLYMEMKESGVINESNISESKVALVYGQMNEPPGARMRVGLTALTMAEFFRDINKQDVLLFIDNIFRFVQAGSEVSALLGRMPSAVGYQPTLATEMGGLQERITSTKDGSITSIQAVYVPADDLTDPAPATTFAHLDATTVLSRNLASKGIYPAVDPLDSTSTMLQPWIVGDQHYQCAQNVKQTLQRYKELQDIIAILGLDELSEEDRLIVARARKIERFLSQPFFVAEVFTGSPGKYVSLAETIQGFNLILSGELDDLPEQAFYLVGNLDEAVSKAATLS</sequence>
<proteinExistence type="inferred from homology"/>
<feature type="chain" id="PRO_0000144506" description="ATP synthase subunit beta, chloroplastic">
    <location>
        <begin position="1"/>
        <end position="481"/>
    </location>
</feature>
<feature type="binding site" evidence="1">
    <location>
        <begin position="162"/>
        <end position="169"/>
    </location>
    <ligand>
        <name>ATP</name>
        <dbReference type="ChEBI" id="CHEBI:30616"/>
    </ligand>
</feature>
<gene>
    <name evidence="1" type="primary">atpB</name>
</gene>
<organism>
    <name type="scientific">Chlorella vulgaris</name>
    <name type="common">Green alga</name>
    <dbReference type="NCBI Taxonomy" id="3077"/>
    <lineage>
        <taxon>Eukaryota</taxon>
        <taxon>Viridiplantae</taxon>
        <taxon>Chlorophyta</taxon>
        <taxon>core chlorophytes</taxon>
        <taxon>Trebouxiophyceae</taxon>
        <taxon>Chlorellales</taxon>
        <taxon>Chlorellaceae</taxon>
        <taxon>Chlorella clade</taxon>
        <taxon>Chlorella</taxon>
    </lineage>
</organism>
<geneLocation type="chloroplast"/>
<comment type="function">
    <text evidence="1">Produces ATP from ADP in the presence of a proton gradient across the membrane. The catalytic sites are hosted primarily by the beta subunits.</text>
</comment>
<comment type="catalytic activity">
    <reaction evidence="1">
        <text>ATP + H2O + 4 H(+)(in) = ADP + phosphate + 5 H(+)(out)</text>
        <dbReference type="Rhea" id="RHEA:57720"/>
        <dbReference type="ChEBI" id="CHEBI:15377"/>
        <dbReference type="ChEBI" id="CHEBI:15378"/>
        <dbReference type="ChEBI" id="CHEBI:30616"/>
        <dbReference type="ChEBI" id="CHEBI:43474"/>
        <dbReference type="ChEBI" id="CHEBI:456216"/>
        <dbReference type="EC" id="7.1.2.2"/>
    </reaction>
</comment>
<comment type="subunit">
    <text evidence="1">F-type ATPases have 2 components, CF(1) - the catalytic core - and CF(0) - the membrane proton channel. CF(1) has five subunits: alpha(3), beta(3), gamma(1), delta(1), epsilon(1). CF(0) has four main subunits: a(1), b(1), b'(1) and c(9-12).</text>
</comment>
<comment type="subcellular location">
    <subcellularLocation>
        <location evidence="1">Plastid</location>
        <location evidence="1">Chloroplast thylakoid membrane</location>
        <topology evidence="1">Peripheral membrane protein</topology>
    </subcellularLocation>
</comment>
<comment type="similarity">
    <text evidence="1">Belongs to the ATPase alpha/beta chains family.</text>
</comment>
<keyword id="KW-0066">ATP synthesis</keyword>
<keyword id="KW-0067">ATP-binding</keyword>
<keyword id="KW-0139">CF(1)</keyword>
<keyword id="KW-0150">Chloroplast</keyword>
<keyword id="KW-0375">Hydrogen ion transport</keyword>
<keyword id="KW-0406">Ion transport</keyword>
<keyword id="KW-0472">Membrane</keyword>
<keyword id="KW-0547">Nucleotide-binding</keyword>
<keyword id="KW-0934">Plastid</keyword>
<keyword id="KW-0793">Thylakoid</keyword>
<keyword id="KW-1278">Translocase</keyword>
<keyword id="KW-0813">Transport</keyword>
<dbReference type="EC" id="7.1.2.2" evidence="1"/>
<dbReference type="EMBL" id="D10997">
    <property type="protein sequence ID" value="BAA01769.1"/>
    <property type="molecule type" value="Genomic_DNA"/>
</dbReference>
<dbReference type="EMBL" id="AB001684">
    <property type="protein sequence ID" value="BAA57982.1"/>
    <property type="molecule type" value="Genomic_DNA"/>
</dbReference>
<dbReference type="PIR" id="T07334">
    <property type="entry name" value="T07334"/>
</dbReference>
<dbReference type="RefSeq" id="NP_045906.1">
    <property type="nucleotide sequence ID" value="NC_001865.1"/>
</dbReference>
<dbReference type="SMR" id="P32978"/>
<dbReference type="GeneID" id="809107"/>
<dbReference type="OrthoDB" id="149879at2759"/>
<dbReference type="GO" id="GO:0009535">
    <property type="term" value="C:chloroplast thylakoid membrane"/>
    <property type="evidence" value="ECO:0007669"/>
    <property type="project" value="UniProtKB-SubCell"/>
</dbReference>
<dbReference type="GO" id="GO:0005739">
    <property type="term" value="C:mitochondrion"/>
    <property type="evidence" value="ECO:0007669"/>
    <property type="project" value="GOC"/>
</dbReference>
<dbReference type="GO" id="GO:0045259">
    <property type="term" value="C:proton-transporting ATP synthase complex"/>
    <property type="evidence" value="ECO:0007669"/>
    <property type="project" value="UniProtKB-KW"/>
</dbReference>
<dbReference type="GO" id="GO:0005524">
    <property type="term" value="F:ATP binding"/>
    <property type="evidence" value="ECO:0007669"/>
    <property type="project" value="UniProtKB-UniRule"/>
</dbReference>
<dbReference type="GO" id="GO:0016887">
    <property type="term" value="F:ATP hydrolysis activity"/>
    <property type="evidence" value="ECO:0007669"/>
    <property type="project" value="InterPro"/>
</dbReference>
<dbReference type="GO" id="GO:0046933">
    <property type="term" value="F:proton-transporting ATP synthase activity, rotational mechanism"/>
    <property type="evidence" value="ECO:0007669"/>
    <property type="project" value="UniProtKB-UniRule"/>
</dbReference>
<dbReference type="GO" id="GO:0042776">
    <property type="term" value="P:proton motive force-driven mitochondrial ATP synthesis"/>
    <property type="evidence" value="ECO:0007669"/>
    <property type="project" value="TreeGrafter"/>
</dbReference>
<dbReference type="CDD" id="cd18110">
    <property type="entry name" value="ATP-synt_F1_beta_C"/>
    <property type="match status" value="1"/>
</dbReference>
<dbReference type="CDD" id="cd18115">
    <property type="entry name" value="ATP-synt_F1_beta_N"/>
    <property type="match status" value="1"/>
</dbReference>
<dbReference type="CDD" id="cd01133">
    <property type="entry name" value="F1-ATPase_beta_CD"/>
    <property type="match status" value="1"/>
</dbReference>
<dbReference type="FunFam" id="1.10.1140.10:FF:000001">
    <property type="entry name" value="ATP synthase subunit beta"/>
    <property type="match status" value="1"/>
</dbReference>
<dbReference type="FunFam" id="3.40.50.300:FF:000026">
    <property type="entry name" value="ATP synthase subunit beta"/>
    <property type="match status" value="1"/>
</dbReference>
<dbReference type="FunFam" id="2.40.10.170:FF:000002">
    <property type="entry name" value="ATP synthase subunit beta, chloroplastic"/>
    <property type="match status" value="1"/>
</dbReference>
<dbReference type="Gene3D" id="2.40.10.170">
    <property type="match status" value="1"/>
</dbReference>
<dbReference type="Gene3D" id="1.10.1140.10">
    <property type="entry name" value="Bovine Mitochondrial F1-atpase, Atp Synthase Beta Chain, Chain D, domain 3"/>
    <property type="match status" value="1"/>
</dbReference>
<dbReference type="Gene3D" id="3.40.50.300">
    <property type="entry name" value="P-loop containing nucleotide triphosphate hydrolases"/>
    <property type="match status" value="1"/>
</dbReference>
<dbReference type="HAMAP" id="MF_01347">
    <property type="entry name" value="ATP_synth_beta_bact"/>
    <property type="match status" value="1"/>
</dbReference>
<dbReference type="InterPro" id="IPR003593">
    <property type="entry name" value="AAA+_ATPase"/>
</dbReference>
<dbReference type="InterPro" id="IPR055190">
    <property type="entry name" value="ATP-synt_VA_C"/>
</dbReference>
<dbReference type="InterPro" id="IPR005722">
    <property type="entry name" value="ATP_synth_F1_bsu"/>
</dbReference>
<dbReference type="InterPro" id="IPR020003">
    <property type="entry name" value="ATPase_a/bsu_AS"/>
</dbReference>
<dbReference type="InterPro" id="IPR050053">
    <property type="entry name" value="ATPase_alpha/beta_chains"/>
</dbReference>
<dbReference type="InterPro" id="IPR004100">
    <property type="entry name" value="ATPase_F1/V1/A1_a/bsu_N"/>
</dbReference>
<dbReference type="InterPro" id="IPR036121">
    <property type="entry name" value="ATPase_F1/V1/A1_a/bsu_N_sf"/>
</dbReference>
<dbReference type="InterPro" id="IPR000194">
    <property type="entry name" value="ATPase_F1/V1/A1_a/bsu_nucl-bd"/>
</dbReference>
<dbReference type="InterPro" id="IPR024034">
    <property type="entry name" value="ATPase_F1/V1_b/a_C"/>
</dbReference>
<dbReference type="InterPro" id="IPR027417">
    <property type="entry name" value="P-loop_NTPase"/>
</dbReference>
<dbReference type="NCBIfam" id="TIGR01039">
    <property type="entry name" value="atpD"/>
    <property type="match status" value="1"/>
</dbReference>
<dbReference type="PANTHER" id="PTHR15184">
    <property type="entry name" value="ATP SYNTHASE"/>
    <property type="match status" value="1"/>
</dbReference>
<dbReference type="PANTHER" id="PTHR15184:SF71">
    <property type="entry name" value="ATP SYNTHASE SUBUNIT BETA, MITOCHONDRIAL"/>
    <property type="match status" value="1"/>
</dbReference>
<dbReference type="Pfam" id="PF00006">
    <property type="entry name" value="ATP-synt_ab"/>
    <property type="match status" value="1"/>
</dbReference>
<dbReference type="Pfam" id="PF02874">
    <property type="entry name" value="ATP-synt_ab_N"/>
    <property type="match status" value="1"/>
</dbReference>
<dbReference type="Pfam" id="PF22919">
    <property type="entry name" value="ATP-synt_VA_C"/>
    <property type="match status" value="1"/>
</dbReference>
<dbReference type="SMART" id="SM00382">
    <property type="entry name" value="AAA"/>
    <property type="match status" value="1"/>
</dbReference>
<dbReference type="SUPFAM" id="SSF47917">
    <property type="entry name" value="C-terminal domain of alpha and beta subunits of F1 ATP synthase"/>
    <property type="match status" value="1"/>
</dbReference>
<dbReference type="SUPFAM" id="SSF50615">
    <property type="entry name" value="N-terminal domain of alpha and beta subunits of F1 ATP synthase"/>
    <property type="match status" value="1"/>
</dbReference>
<dbReference type="SUPFAM" id="SSF52540">
    <property type="entry name" value="P-loop containing nucleoside triphosphate hydrolases"/>
    <property type="match status" value="1"/>
</dbReference>
<dbReference type="PROSITE" id="PS00152">
    <property type="entry name" value="ATPASE_ALPHA_BETA"/>
    <property type="match status" value="1"/>
</dbReference>
<evidence type="ECO:0000255" key="1">
    <source>
        <dbReference type="HAMAP-Rule" id="MF_01347"/>
    </source>
</evidence>
<name>ATPB_CHLVU</name>
<reference key="1">
    <citation type="journal article" date="1992" name="Life Sci. Adv. (Genet.)">
        <title>Gene organization in Chlorella chloroplast genome is peculiar but suggests common lineage with land plants.</title>
        <authorList>
            <person name="Yoshinaga K."/>
            <person name="Iwasaki H."/>
            <person name="Sasaki T."/>
        </authorList>
    </citation>
    <scope>NUCLEOTIDE SEQUENCE [GENOMIC DNA]</scope>
    <source>
        <strain>IAM C-27 / Tamiya</strain>
    </source>
</reference>
<reference key="2">
    <citation type="journal article" date="1997" name="Proc. Natl. Acad. Sci. U.S.A.">
        <title>Complete nucleotide sequence of the chloroplast genome from the green alga Chlorella vulgaris: the existence of genes possibly involved in chloroplast division.</title>
        <authorList>
            <person name="Wakasugi T."/>
            <person name="Nagai T."/>
            <person name="Kapoor M."/>
            <person name="Sugita M."/>
            <person name="Ito M."/>
            <person name="Ito S."/>
            <person name="Tsudzuki J."/>
            <person name="Nakashima K."/>
            <person name="Tsudzuki T."/>
            <person name="Suzuki Y."/>
            <person name="Hamada A."/>
            <person name="Ohta T."/>
            <person name="Inamura A."/>
            <person name="Yoshinaga K."/>
            <person name="Sugiura M."/>
        </authorList>
    </citation>
    <scope>NUCLEOTIDE SEQUENCE [LARGE SCALE GENOMIC DNA]</scope>
    <source>
        <strain>IAM C-27 / Tamiya</strain>
    </source>
</reference>